<gene>
    <name type="primary">bbuR</name>
    <name type="ordered locus">BB4328</name>
</gene>
<accession>O06703</accession>
<reference key="1">
    <citation type="journal article" date="1998" name="Gene">
        <title>Characterisation of the urease gene cluster in Bordetella bronchiseptica.</title>
        <authorList>
            <person name="McMillan D.J."/>
            <person name="Mau M."/>
            <person name="Walker M.J."/>
        </authorList>
    </citation>
    <scope>NUCLEOTIDE SEQUENCE [GENOMIC DNA]</scope>
    <source>
        <strain>BB7866</strain>
    </source>
</reference>
<reference key="2">
    <citation type="journal article" date="2003" name="Nat. Genet.">
        <title>Comparative analysis of the genome sequences of Bordetella pertussis, Bordetella parapertussis and Bordetella bronchiseptica.</title>
        <authorList>
            <person name="Parkhill J."/>
            <person name="Sebaihia M."/>
            <person name="Preston A."/>
            <person name="Murphy L.D."/>
            <person name="Thomson N.R."/>
            <person name="Harris D.E."/>
            <person name="Holden M.T.G."/>
            <person name="Churcher C.M."/>
            <person name="Bentley S.D."/>
            <person name="Mungall K.L."/>
            <person name="Cerdeno-Tarraga A.-M."/>
            <person name="Temple L."/>
            <person name="James K.D."/>
            <person name="Harris B."/>
            <person name="Quail M.A."/>
            <person name="Achtman M."/>
            <person name="Atkin R."/>
            <person name="Baker S."/>
            <person name="Basham D."/>
            <person name="Bason N."/>
            <person name="Cherevach I."/>
            <person name="Chillingworth T."/>
            <person name="Collins M."/>
            <person name="Cronin A."/>
            <person name="Davis P."/>
            <person name="Doggett J."/>
            <person name="Feltwell T."/>
            <person name="Goble A."/>
            <person name="Hamlin N."/>
            <person name="Hauser H."/>
            <person name="Holroyd S."/>
            <person name="Jagels K."/>
            <person name="Leather S."/>
            <person name="Moule S."/>
            <person name="Norberczak H."/>
            <person name="O'Neil S."/>
            <person name="Ormond D."/>
            <person name="Price C."/>
            <person name="Rabbinowitsch E."/>
            <person name="Rutter S."/>
            <person name="Sanders M."/>
            <person name="Saunders D."/>
            <person name="Seeger K."/>
            <person name="Sharp S."/>
            <person name="Simmonds M."/>
            <person name="Skelton J."/>
            <person name="Squares R."/>
            <person name="Squares S."/>
            <person name="Stevens K."/>
            <person name="Unwin L."/>
            <person name="Whitehead S."/>
            <person name="Barrell B.G."/>
            <person name="Maskell D.J."/>
        </authorList>
    </citation>
    <scope>NUCLEOTIDE SEQUENCE [LARGE SCALE GENOMIC DNA]</scope>
    <source>
        <strain>ATCC BAA-588 / NCTC 13252 / RB50</strain>
    </source>
</reference>
<name>BBUR_BORBR</name>
<proteinExistence type="inferred from homology"/>
<dbReference type="EMBL" id="AF000579">
    <property type="protein sequence ID" value="AAC46123.1"/>
    <property type="status" value="ALT_FRAME"/>
    <property type="molecule type" value="Genomic_DNA"/>
</dbReference>
<dbReference type="EMBL" id="BX640450">
    <property type="protein sequence ID" value="CAE34691.1"/>
    <property type="molecule type" value="Genomic_DNA"/>
</dbReference>
<dbReference type="RefSeq" id="WP_003814834.1">
    <property type="nucleotide sequence ID" value="NC_002927.3"/>
</dbReference>
<dbReference type="SMR" id="O06703"/>
<dbReference type="KEGG" id="bbr:BB4328"/>
<dbReference type="eggNOG" id="COG0583">
    <property type="taxonomic scope" value="Bacteria"/>
</dbReference>
<dbReference type="HOGENOM" id="CLU_039613_6_5_4"/>
<dbReference type="Proteomes" id="UP000001027">
    <property type="component" value="Chromosome"/>
</dbReference>
<dbReference type="GO" id="GO:0003700">
    <property type="term" value="F:DNA-binding transcription factor activity"/>
    <property type="evidence" value="ECO:0007669"/>
    <property type="project" value="InterPro"/>
</dbReference>
<dbReference type="GO" id="GO:0000976">
    <property type="term" value="F:transcription cis-regulatory region binding"/>
    <property type="evidence" value="ECO:0007669"/>
    <property type="project" value="TreeGrafter"/>
</dbReference>
<dbReference type="CDD" id="cd08433">
    <property type="entry name" value="PBP2_Nac"/>
    <property type="match status" value="1"/>
</dbReference>
<dbReference type="FunFam" id="1.10.10.10:FF:000001">
    <property type="entry name" value="LysR family transcriptional regulator"/>
    <property type="match status" value="1"/>
</dbReference>
<dbReference type="Gene3D" id="3.40.190.10">
    <property type="entry name" value="Periplasmic binding protein-like II"/>
    <property type="match status" value="2"/>
</dbReference>
<dbReference type="Gene3D" id="1.10.10.10">
    <property type="entry name" value="Winged helix-like DNA-binding domain superfamily/Winged helix DNA-binding domain"/>
    <property type="match status" value="1"/>
</dbReference>
<dbReference type="InterPro" id="IPR005119">
    <property type="entry name" value="LysR_subst-bd"/>
</dbReference>
<dbReference type="InterPro" id="IPR000847">
    <property type="entry name" value="Tscrpt_reg_HTH_LysR"/>
</dbReference>
<dbReference type="InterPro" id="IPR036388">
    <property type="entry name" value="WH-like_DNA-bd_sf"/>
</dbReference>
<dbReference type="InterPro" id="IPR036390">
    <property type="entry name" value="WH_DNA-bd_sf"/>
</dbReference>
<dbReference type="PANTHER" id="PTHR30126:SF98">
    <property type="entry name" value="HTH-TYPE TRANSCRIPTIONAL ACTIVATOR BAUR"/>
    <property type="match status" value="1"/>
</dbReference>
<dbReference type="PANTHER" id="PTHR30126">
    <property type="entry name" value="HTH-TYPE TRANSCRIPTIONAL REGULATOR"/>
    <property type="match status" value="1"/>
</dbReference>
<dbReference type="Pfam" id="PF00126">
    <property type="entry name" value="HTH_1"/>
    <property type="match status" value="1"/>
</dbReference>
<dbReference type="Pfam" id="PF03466">
    <property type="entry name" value="LysR_substrate"/>
    <property type="match status" value="1"/>
</dbReference>
<dbReference type="PRINTS" id="PR00039">
    <property type="entry name" value="HTHLYSR"/>
</dbReference>
<dbReference type="SUPFAM" id="SSF53850">
    <property type="entry name" value="Periplasmic binding protein-like II"/>
    <property type="match status" value="1"/>
</dbReference>
<dbReference type="SUPFAM" id="SSF46785">
    <property type="entry name" value="Winged helix' DNA-binding domain"/>
    <property type="match status" value="1"/>
</dbReference>
<dbReference type="PROSITE" id="PS50931">
    <property type="entry name" value="HTH_LYSR"/>
    <property type="match status" value="1"/>
</dbReference>
<evidence type="ECO:0000255" key="1">
    <source>
        <dbReference type="PROSITE-ProRule" id="PRU00253"/>
    </source>
</evidence>
<evidence type="ECO:0000305" key="2"/>
<keyword id="KW-0238">DNA-binding</keyword>
<keyword id="KW-0804">Transcription</keyword>
<keyword id="KW-0805">Transcription regulation</keyword>
<feature type="chain" id="PRO_0000105593" description="HTH-type transcriptional regulator BbuR">
    <location>
        <begin position="1"/>
        <end position="325"/>
    </location>
</feature>
<feature type="domain" description="HTH lysR-type" evidence="1">
    <location>
        <begin position="15"/>
        <end position="72"/>
    </location>
</feature>
<feature type="DNA-binding region" description="H-T-H motif" evidence="1">
    <location>
        <begin position="32"/>
        <end position="51"/>
    </location>
</feature>
<comment type="similarity">
    <text evidence="2">Belongs to the LysR transcriptional regulatory family.</text>
</comment>
<comment type="sequence caution" evidence="2">
    <conflict type="frameshift">
        <sequence resource="EMBL-CDS" id="AAC46123"/>
    </conflict>
</comment>
<protein>
    <recommendedName>
        <fullName>HTH-type transcriptional regulator BbuR</fullName>
    </recommendedName>
</protein>
<organism>
    <name type="scientific">Bordetella bronchiseptica (strain ATCC BAA-588 / NCTC 13252 / RB50)</name>
    <name type="common">Alcaligenes bronchisepticus</name>
    <dbReference type="NCBI Taxonomy" id="257310"/>
    <lineage>
        <taxon>Bacteria</taxon>
        <taxon>Pseudomonadati</taxon>
        <taxon>Pseudomonadota</taxon>
        <taxon>Betaproteobacteria</taxon>
        <taxon>Burkholderiales</taxon>
        <taxon>Alcaligenaceae</taxon>
        <taxon>Bordetella</taxon>
    </lineage>
</organism>
<sequence>MAAEDFALPADHNPLDTDLLNVFCWVAKTQSFSRAAAELGTSQPVITRKIGRLEECLGVALFVRSNRGCVLTAAGTVLIGKAPSILLQLAEIKEEVSHSASVVSGSLSMGITHAASTVMAPRLLPVIARRWPKLQVDVMEALSRTLVERVLHGELALAVLFDPPPHPDLICRPLLIERLCLVGNPQSDLRTMAPPTIRDLARLPLMLPSGGQIIRNLLEDAFAEINEPLKPVYEAASMAMLREMAVQGIGYTLLTQGGVAEDVAAGKLIAQALPDKGMVVTLTLITKRESTRLRNVRLLSDFVASEIRAVARQGQWPGHPTVVGG</sequence>